<protein>
    <recommendedName>
        <fullName evidence="9">Dehydratase aurZ</fullName>
        <ecNumber evidence="7">1.-.-.-</ecNumber>
    </recommendedName>
    <alternativeName>
        <fullName evidence="9">Aurofusarin biosynthesis cluster protein Z</fullName>
    </alternativeName>
    <alternativeName>
        <fullName evidence="8">Gibberella pigment protein 6</fullName>
    </alternativeName>
</protein>
<sequence>MSPHSDTQETSHEATVTGQPDTLVCLTITAYKKPSLSEKEYRHHMTKVHAKLVSPLMEEYGIVRYTMTHNTKETRPMLYQLYDPQFSNQSDYDCIVQFIFKDIKDFLRMKADPRFLEKVAPDHVNFADTKRSTMTVGYYEEFVNDGKVVPKD</sequence>
<name>AURZ_GIBZE</name>
<dbReference type="EC" id="1.-.-.-" evidence="7"/>
<dbReference type="EMBL" id="HG970332">
    <property type="protein sequence ID" value="CEF74602.1"/>
    <property type="molecule type" value="Genomic_DNA"/>
</dbReference>
<dbReference type="RefSeq" id="XP_011318234.1">
    <property type="nucleotide sequence ID" value="XM_011319932.1"/>
</dbReference>
<dbReference type="SMR" id="I1RF59"/>
<dbReference type="STRING" id="229533.I1RF59"/>
<dbReference type="KEGG" id="fgr:FGSG_02325"/>
<dbReference type="VEuPathDB" id="FungiDB:FGRAMPH1_01G05595"/>
<dbReference type="eggNOG" id="ENOG502SJ0E">
    <property type="taxonomic scope" value="Eukaryota"/>
</dbReference>
<dbReference type="HOGENOM" id="CLU_115019_0_0_1"/>
<dbReference type="InParanoid" id="I1RF59"/>
<dbReference type="OrthoDB" id="32346at110618"/>
<dbReference type="BioCyc" id="MetaCyc:MONOMER-19448"/>
<dbReference type="Proteomes" id="UP000070720">
    <property type="component" value="Chromosome 1"/>
</dbReference>
<dbReference type="GO" id="GO:0004497">
    <property type="term" value="F:monooxygenase activity"/>
    <property type="evidence" value="ECO:0007669"/>
    <property type="project" value="UniProtKB-KW"/>
</dbReference>
<dbReference type="Gene3D" id="3.30.70.100">
    <property type="match status" value="1"/>
</dbReference>
<dbReference type="InterPro" id="IPR011008">
    <property type="entry name" value="Dimeric_a/b-barrel"/>
</dbReference>
<dbReference type="InterPro" id="IPR009799">
    <property type="entry name" value="EthD_dom"/>
</dbReference>
<dbReference type="Pfam" id="PF07110">
    <property type="entry name" value="EthD"/>
    <property type="match status" value="1"/>
</dbReference>
<dbReference type="SUPFAM" id="SSF54909">
    <property type="entry name" value="Dimeric alpha+beta barrel"/>
    <property type="match status" value="1"/>
</dbReference>
<proteinExistence type="evidence at protein level"/>
<gene>
    <name evidence="9" type="primary">aurZ</name>
    <name evidence="8" type="synonym">GIP6</name>
    <name type="ORF">FG02325</name>
    <name type="ORF">FGRAMPH1_01T05595</name>
</gene>
<feature type="chain" id="PRO_0000441087" description="Dehydratase aurZ">
    <location>
        <begin position="1"/>
        <end position="152"/>
    </location>
</feature>
<feature type="domain" description="EthD" evidence="1">
    <location>
        <begin position="34"/>
        <end position="129"/>
    </location>
</feature>
<comment type="function">
    <text evidence="2 3 5 6 7">Dehydratase; part of the gene cluster that mediates the biosynthesis of aurofusarin, a red mycelium pigment which is acting as a mycotoxin (PubMed:15809006, PubMed:15811992, PubMed:16879655). The first step is performed by the polyketide synthase which condenses one acetyl-CoA and 6 malonyl-CoA units to form the first intermediate, the cyclic heptaketide and yellow pigment YWA1 (PubMed:21296881, PubMed:23557488). The C2 hydroxyl group in the pyrone ring of YWA1 is probably formed during ring closure by an aldol-type cyclization reaction (PubMed:21296881). The dehydratase aurZ then acts as the first tailoring enzyme in the aurofusarin biosynthetic pathway by converting YWA1 to nor-rubrofusarin (PubMed:21296881, PubMed:23557488). Nor-rubrofusarin is then methylated to rubrofusarin by the O-methyltransferase aurJ (PubMed:21296881, PubMed:23557488). Rubrofusarin is then transported across the plasma membrane by the rubrofusarin-specific pump aurT for further enzymatic processing by the extracellular complex composed of GIP1, aurF, aurO and aurS to yield aurofusarin (PubMed:21296881).</text>
</comment>
<comment type="catalytic activity">
    <reaction evidence="7">
        <text>naphtopyrone YWA1 = norrubrofusarin + H2O + H(+)</text>
        <dbReference type="Rhea" id="RHEA:62680"/>
        <dbReference type="ChEBI" id="CHEBI:15377"/>
        <dbReference type="ChEBI" id="CHEBI:15378"/>
        <dbReference type="ChEBI" id="CHEBI:133763"/>
        <dbReference type="ChEBI" id="CHEBI:145839"/>
    </reaction>
    <physiologicalReaction direction="left-to-right" evidence="7">
        <dbReference type="Rhea" id="RHEA:62681"/>
    </physiologicalReaction>
</comment>
<comment type="pathway">
    <text evidence="2 5 6 7">Pigment biosynthesis.</text>
</comment>
<comment type="induction">
    <text evidence="4">Expression is regulated by the aurofusarin biosynthesis cluster-specific transcription factor aurR1/GIP2 (PubMed:16461721).</text>
</comment>
<comment type="disruption phenotype">
    <text evidence="6">Impairs autofusarin biosynthesis and leads to the accumulation of the intermediate YWA1 (PubMed:21296881).</text>
</comment>
<comment type="similarity">
    <text evidence="10">Belongs to the tpcK family.</text>
</comment>
<evidence type="ECO:0000255" key="1"/>
<evidence type="ECO:0000269" key="2">
    <source>
    </source>
</evidence>
<evidence type="ECO:0000269" key="3">
    <source>
    </source>
</evidence>
<evidence type="ECO:0000269" key="4">
    <source>
    </source>
</evidence>
<evidence type="ECO:0000269" key="5">
    <source>
    </source>
</evidence>
<evidence type="ECO:0000269" key="6">
    <source>
    </source>
</evidence>
<evidence type="ECO:0000269" key="7">
    <source>
    </source>
</evidence>
<evidence type="ECO:0000303" key="8">
    <source>
    </source>
</evidence>
<evidence type="ECO:0000303" key="9">
    <source>
    </source>
</evidence>
<evidence type="ECO:0000305" key="10"/>
<reference key="1">
    <citation type="journal article" date="2007" name="Science">
        <title>The Fusarium graminearum genome reveals a link between localized polymorphism and pathogen specialization.</title>
        <authorList>
            <person name="Cuomo C.A."/>
            <person name="Gueldener U."/>
            <person name="Xu J.-R."/>
            <person name="Trail F."/>
            <person name="Turgeon B.G."/>
            <person name="Di Pietro A."/>
            <person name="Walton J.D."/>
            <person name="Ma L.-J."/>
            <person name="Baker S.E."/>
            <person name="Rep M."/>
            <person name="Adam G."/>
            <person name="Antoniw J."/>
            <person name="Baldwin T."/>
            <person name="Calvo S.E."/>
            <person name="Chang Y.-L."/>
            <person name="DeCaprio D."/>
            <person name="Gale L.R."/>
            <person name="Gnerre S."/>
            <person name="Goswami R.S."/>
            <person name="Hammond-Kosack K."/>
            <person name="Harris L.J."/>
            <person name="Hilburn K."/>
            <person name="Kennell J.C."/>
            <person name="Kroken S."/>
            <person name="Magnuson J.K."/>
            <person name="Mannhaupt G."/>
            <person name="Mauceli E.W."/>
            <person name="Mewes H.-W."/>
            <person name="Mitterbauer R."/>
            <person name="Muehlbauer G."/>
            <person name="Muensterkoetter M."/>
            <person name="Nelson D."/>
            <person name="O'Donnell K."/>
            <person name="Ouellet T."/>
            <person name="Qi W."/>
            <person name="Quesneville H."/>
            <person name="Roncero M.I.G."/>
            <person name="Seong K.-Y."/>
            <person name="Tetko I.V."/>
            <person name="Urban M."/>
            <person name="Waalwijk C."/>
            <person name="Ward T.J."/>
            <person name="Yao J."/>
            <person name="Birren B.W."/>
            <person name="Kistler H.C."/>
        </authorList>
    </citation>
    <scope>NUCLEOTIDE SEQUENCE [LARGE SCALE GENOMIC DNA]</scope>
    <source>
        <strain>ATCC MYA-4620 / CBS 123657 / FGSC 9075 / NRRL 31084 / PH-1</strain>
    </source>
</reference>
<reference key="2">
    <citation type="journal article" date="2010" name="Nature">
        <title>Comparative genomics reveals mobile pathogenicity chromosomes in Fusarium.</title>
        <authorList>
            <person name="Ma L.-J."/>
            <person name="van der Does H.C."/>
            <person name="Borkovich K.A."/>
            <person name="Coleman J.J."/>
            <person name="Daboussi M.-J."/>
            <person name="Di Pietro A."/>
            <person name="Dufresne M."/>
            <person name="Freitag M."/>
            <person name="Grabherr M."/>
            <person name="Henrissat B."/>
            <person name="Houterman P.M."/>
            <person name="Kang S."/>
            <person name="Shim W.-B."/>
            <person name="Woloshuk C."/>
            <person name="Xie X."/>
            <person name="Xu J.-R."/>
            <person name="Antoniw J."/>
            <person name="Baker S.E."/>
            <person name="Bluhm B.H."/>
            <person name="Breakspear A."/>
            <person name="Brown D.W."/>
            <person name="Butchko R.A.E."/>
            <person name="Chapman S."/>
            <person name="Coulson R."/>
            <person name="Coutinho P.M."/>
            <person name="Danchin E.G.J."/>
            <person name="Diener A."/>
            <person name="Gale L.R."/>
            <person name="Gardiner D.M."/>
            <person name="Goff S."/>
            <person name="Hammond-Kosack K.E."/>
            <person name="Hilburn K."/>
            <person name="Hua-Van A."/>
            <person name="Jonkers W."/>
            <person name="Kazan K."/>
            <person name="Kodira C.D."/>
            <person name="Koehrsen M."/>
            <person name="Kumar L."/>
            <person name="Lee Y.-H."/>
            <person name="Li L."/>
            <person name="Manners J.M."/>
            <person name="Miranda-Saavedra D."/>
            <person name="Mukherjee M."/>
            <person name="Park G."/>
            <person name="Park J."/>
            <person name="Park S.-Y."/>
            <person name="Proctor R.H."/>
            <person name="Regev A."/>
            <person name="Ruiz-Roldan M.C."/>
            <person name="Sain D."/>
            <person name="Sakthikumar S."/>
            <person name="Sykes S."/>
            <person name="Schwartz D.C."/>
            <person name="Turgeon B.G."/>
            <person name="Wapinski I."/>
            <person name="Yoder O."/>
            <person name="Young S."/>
            <person name="Zeng Q."/>
            <person name="Zhou S."/>
            <person name="Galagan J."/>
            <person name="Cuomo C.A."/>
            <person name="Kistler H.C."/>
            <person name="Rep M."/>
        </authorList>
    </citation>
    <scope>GENOME REANNOTATION</scope>
    <source>
        <strain>ATCC MYA-4620 / CBS 123657 / FGSC 9075 / NRRL 31084 / PH-1</strain>
    </source>
</reference>
<reference key="3">
    <citation type="journal article" date="2015" name="BMC Genomics">
        <title>The completed genome sequence of the pathogenic ascomycete fungus Fusarium graminearum.</title>
        <authorList>
            <person name="King R."/>
            <person name="Urban M."/>
            <person name="Hammond-Kosack M.C.U."/>
            <person name="Hassani-Pak K."/>
            <person name="Hammond-Kosack K.E."/>
        </authorList>
    </citation>
    <scope>NUCLEOTIDE SEQUENCE [LARGE SCALE GENOMIC DNA]</scope>
    <source>
        <strain>ATCC MYA-4620 / CBS 123657 / FGSC 9075 / NRRL 31084 / PH-1</strain>
    </source>
</reference>
<reference key="4">
    <citation type="journal article" date="2005" name="Appl. Environ. Microbiol.">
        <title>Putative polyketide synthase and laccase genes for biosynthesis of aurofusarin in Gibberella zeae.</title>
        <authorList>
            <person name="Kim J.E."/>
            <person name="Han K.H."/>
            <person name="Jin J."/>
            <person name="Kim H."/>
            <person name="Kim J.C."/>
            <person name="Yun S.H."/>
            <person name="Lee Y.W."/>
        </authorList>
    </citation>
    <scope>FUNCTION</scope>
</reference>
<reference key="5">
    <citation type="journal article" date="2005" name="Fungal Genet. Biol.">
        <title>Identification of a gene cluster responsible for the biosynthesis of aurofusarin in the Fusarium graminearum species complex.</title>
        <authorList>
            <person name="Malz S."/>
            <person name="Grell M.N."/>
            <person name="Thrane C."/>
            <person name="Maier F.J."/>
            <person name="Rosager P."/>
            <person name="Felk A."/>
            <person name="Albertsen K.S."/>
            <person name="Salomon S."/>
            <person name="Bohn L."/>
            <person name="Schaefer W."/>
            <person name="Giese H."/>
        </authorList>
    </citation>
    <scope>FUNCTION</scope>
    <scope>PATHWAY</scope>
</reference>
<reference key="6">
    <citation type="journal article" date="2006" name="Mol. Microbiol.">
        <title>The biosynthetic pathway for aurofusarin in Fusarium graminearum reveals a close link between the naphthoquinones and naphthopyrones.</title>
        <authorList>
            <person name="Frandsen R.J."/>
            <person name="Nielsen N.J."/>
            <person name="Maolanon N."/>
            <person name="Soerensen J.C."/>
            <person name="Olsson S."/>
            <person name="Nielsen J."/>
            <person name="Giese H."/>
        </authorList>
    </citation>
    <scope>FUNCTION</scope>
    <scope>PATHWAY</scope>
</reference>
<reference key="7">
    <citation type="journal article" date="2006" name="Appl. Environ. Microbiol.">
        <title>GIP2, a putative transcription factor that regulates the aurofusarin biosynthetic gene cluster in Gibberella zeae.</title>
        <authorList>
            <person name="Kim J.E."/>
            <person name="Jin J."/>
            <person name="Kim H."/>
            <person name="Kim J.C."/>
            <person name="Yun S.H."/>
            <person name="Lee Y.W."/>
        </authorList>
    </citation>
    <scope>INDUCTION</scope>
</reference>
<reference key="8">
    <citation type="journal article" date="2011" name="J. Biol. Chem.">
        <title>Two novel classes of enzymes are required for the biosynthesis of aurofusarin in Fusarium graminearum.</title>
        <authorList>
            <person name="Frandsen R.J."/>
            <person name="Schuett C."/>
            <person name="Lund B.W."/>
            <person name="Staerk D."/>
            <person name="Nielsen J."/>
            <person name="Olsson S."/>
            <person name="Giese H."/>
        </authorList>
    </citation>
    <scope>FUNCTION</scope>
    <scope>DISRUPTION PHENOTYPE</scope>
    <scope>PATHWAY</scope>
</reference>
<reference key="9">
    <citation type="journal article" date="2013" name="Microb. Cell Fact.">
        <title>Reconstruction of the biosynthetic pathway for the core fungal polyketide scaffold rubrofusarin in Saccharomyces cerevisiae.</title>
        <authorList>
            <person name="Rugbjerg P."/>
            <person name="Naesby M."/>
            <person name="Mortensen U.H."/>
            <person name="Frandsen R.J."/>
        </authorList>
    </citation>
    <scope>FUNCTION</scope>
    <scope>CATALYTIC ACTIVITY</scope>
    <scope>PATHWAY</scope>
</reference>
<organism>
    <name type="scientific">Gibberella zeae (strain ATCC MYA-4620 / CBS 123657 / FGSC 9075 / NRRL 31084 / PH-1)</name>
    <name type="common">Wheat head blight fungus</name>
    <name type="synonym">Fusarium graminearum</name>
    <dbReference type="NCBI Taxonomy" id="229533"/>
    <lineage>
        <taxon>Eukaryota</taxon>
        <taxon>Fungi</taxon>
        <taxon>Dikarya</taxon>
        <taxon>Ascomycota</taxon>
        <taxon>Pezizomycotina</taxon>
        <taxon>Sordariomycetes</taxon>
        <taxon>Hypocreomycetidae</taxon>
        <taxon>Hypocreales</taxon>
        <taxon>Nectriaceae</taxon>
        <taxon>Fusarium</taxon>
    </lineage>
</organism>
<accession>I1RF59</accession>
<keyword id="KW-0503">Monooxygenase</keyword>
<keyword id="KW-0560">Oxidoreductase</keyword>
<keyword id="KW-1185">Reference proteome</keyword>